<dbReference type="EC" id="5.4.2.-" evidence="1"/>
<dbReference type="EMBL" id="CP001138">
    <property type="protein sequence ID" value="ACH48875.1"/>
    <property type="molecule type" value="Genomic_DNA"/>
</dbReference>
<dbReference type="RefSeq" id="WP_000942363.1">
    <property type="nucleotide sequence ID" value="NC_011149.1"/>
</dbReference>
<dbReference type="SMR" id="B5F543"/>
<dbReference type="KEGG" id="sea:SeAg_B4909"/>
<dbReference type="HOGENOM" id="CLU_033323_9_5_6"/>
<dbReference type="UniPathway" id="UPA00109">
    <property type="reaction ID" value="UER00186"/>
</dbReference>
<dbReference type="Proteomes" id="UP000008819">
    <property type="component" value="Chromosome"/>
</dbReference>
<dbReference type="GO" id="GO:0005737">
    <property type="term" value="C:cytoplasm"/>
    <property type="evidence" value="ECO:0007669"/>
    <property type="project" value="TreeGrafter"/>
</dbReference>
<dbReference type="GO" id="GO:0016791">
    <property type="term" value="F:phosphatase activity"/>
    <property type="evidence" value="ECO:0007669"/>
    <property type="project" value="TreeGrafter"/>
</dbReference>
<dbReference type="GO" id="GO:0004619">
    <property type="term" value="F:phosphoglycerate mutase activity"/>
    <property type="evidence" value="ECO:0007669"/>
    <property type="project" value="UniProtKB-UniRule"/>
</dbReference>
<dbReference type="GO" id="GO:0006096">
    <property type="term" value="P:glycolytic process"/>
    <property type="evidence" value="ECO:0007669"/>
    <property type="project" value="UniProtKB-UniRule"/>
</dbReference>
<dbReference type="CDD" id="cd07067">
    <property type="entry name" value="HP_PGM_like"/>
    <property type="match status" value="1"/>
</dbReference>
<dbReference type="Gene3D" id="3.40.50.1240">
    <property type="entry name" value="Phosphoglycerate mutase-like"/>
    <property type="match status" value="1"/>
</dbReference>
<dbReference type="HAMAP" id="MF_01040">
    <property type="entry name" value="PGAM_GpmB"/>
    <property type="match status" value="1"/>
</dbReference>
<dbReference type="InterPro" id="IPR013078">
    <property type="entry name" value="His_Pase_superF_clade-1"/>
</dbReference>
<dbReference type="InterPro" id="IPR029033">
    <property type="entry name" value="His_PPase_superfam"/>
</dbReference>
<dbReference type="InterPro" id="IPR001345">
    <property type="entry name" value="PG/BPGM_mutase_AS"/>
</dbReference>
<dbReference type="InterPro" id="IPR050275">
    <property type="entry name" value="PGM_Phosphatase"/>
</dbReference>
<dbReference type="InterPro" id="IPR023086">
    <property type="entry name" value="Phosphoglycerate_mutase_GpmB"/>
</dbReference>
<dbReference type="NCBIfam" id="NF002901">
    <property type="entry name" value="PRK03482.1"/>
    <property type="match status" value="1"/>
</dbReference>
<dbReference type="PANTHER" id="PTHR48100">
    <property type="entry name" value="BROAD-SPECIFICITY PHOSPHATASE YOR283W-RELATED"/>
    <property type="match status" value="1"/>
</dbReference>
<dbReference type="PANTHER" id="PTHR48100:SF1">
    <property type="entry name" value="HISTIDINE PHOSPHATASE FAMILY PROTEIN-RELATED"/>
    <property type="match status" value="1"/>
</dbReference>
<dbReference type="Pfam" id="PF00300">
    <property type="entry name" value="His_Phos_1"/>
    <property type="match status" value="1"/>
</dbReference>
<dbReference type="SMART" id="SM00855">
    <property type="entry name" value="PGAM"/>
    <property type="match status" value="1"/>
</dbReference>
<dbReference type="SUPFAM" id="SSF53254">
    <property type="entry name" value="Phosphoglycerate mutase-like"/>
    <property type="match status" value="1"/>
</dbReference>
<dbReference type="PROSITE" id="PS00175">
    <property type="entry name" value="PG_MUTASE"/>
    <property type="match status" value="1"/>
</dbReference>
<sequence>MLQVYLVRHGETQWNAERRIQGQSDSPLTAKGEQQAMQVGERARSLGITHIISSDLGRTKRTAEIIAQACGCDITFDSRLRELDMGVLEKRQIDSLTEEEEGWRRQLVNGTQDGRIPGGESMQELSDRVHAALASCLELPQGSRPLLVSHGIALGCLVSTILGLPAWAERRLRLRNCSISRIDYQESQWLASGWVVETAGDVSHLDAPALDELQR</sequence>
<organism>
    <name type="scientific">Salmonella agona (strain SL483)</name>
    <dbReference type="NCBI Taxonomy" id="454166"/>
    <lineage>
        <taxon>Bacteria</taxon>
        <taxon>Pseudomonadati</taxon>
        <taxon>Pseudomonadota</taxon>
        <taxon>Gammaproteobacteria</taxon>
        <taxon>Enterobacterales</taxon>
        <taxon>Enterobacteriaceae</taxon>
        <taxon>Salmonella</taxon>
    </lineage>
</organism>
<comment type="catalytic activity">
    <reaction evidence="1">
        <text>(2R)-2-phosphoglycerate = (2R)-3-phosphoglycerate</text>
        <dbReference type="Rhea" id="RHEA:15901"/>
        <dbReference type="ChEBI" id="CHEBI:58272"/>
        <dbReference type="ChEBI" id="CHEBI:58289"/>
    </reaction>
</comment>
<comment type="pathway">
    <text evidence="1">Carbohydrate degradation; glycolysis; pyruvate from D-glyceraldehyde 3-phosphate: step 3/5.</text>
</comment>
<comment type="similarity">
    <text evidence="1">Belongs to the phosphoglycerate mutase family. GpmB subfamily.</text>
</comment>
<feature type="chain" id="PRO_1000136011" description="Probable phosphoglycerate mutase GpmB">
    <location>
        <begin position="1"/>
        <end position="215"/>
    </location>
</feature>
<feature type="active site" description="Tele-phosphohistidine intermediate" evidence="1">
    <location>
        <position position="9"/>
    </location>
</feature>
<feature type="active site" description="Proton donor/acceptor" evidence="1">
    <location>
        <position position="82"/>
    </location>
</feature>
<feature type="binding site" evidence="1">
    <location>
        <begin position="8"/>
        <end position="15"/>
    </location>
    <ligand>
        <name>substrate</name>
    </ligand>
</feature>
<feature type="binding site" evidence="1">
    <location>
        <begin position="21"/>
        <end position="22"/>
    </location>
    <ligand>
        <name>substrate</name>
    </ligand>
</feature>
<feature type="binding site" evidence="1">
    <location>
        <position position="58"/>
    </location>
    <ligand>
        <name>substrate</name>
    </ligand>
</feature>
<feature type="binding site" evidence="1">
    <location>
        <position position="60"/>
    </location>
    <ligand>
        <name>substrate</name>
    </ligand>
</feature>
<feature type="binding site" evidence="1">
    <location>
        <begin position="82"/>
        <end position="85"/>
    </location>
    <ligand>
        <name>substrate</name>
    </ligand>
</feature>
<feature type="binding site" evidence="1">
    <location>
        <begin position="104"/>
        <end position="105"/>
    </location>
    <ligand>
        <name>substrate</name>
    </ligand>
</feature>
<feature type="binding site" evidence="1">
    <location>
        <begin position="151"/>
        <end position="152"/>
    </location>
    <ligand>
        <name>substrate</name>
    </ligand>
</feature>
<feature type="site" description="Transition state stabilizer" evidence="1">
    <location>
        <position position="150"/>
    </location>
</feature>
<gene>
    <name evidence="1" type="primary">gpmB</name>
    <name type="ordered locus">SeAg_B4909</name>
</gene>
<evidence type="ECO:0000255" key="1">
    <source>
        <dbReference type="HAMAP-Rule" id="MF_01040"/>
    </source>
</evidence>
<accession>B5F543</accession>
<keyword id="KW-0324">Glycolysis</keyword>
<keyword id="KW-0413">Isomerase</keyword>
<protein>
    <recommendedName>
        <fullName evidence="1">Probable phosphoglycerate mutase GpmB</fullName>
        <ecNumber evidence="1">5.4.2.-</ecNumber>
    </recommendedName>
    <alternativeName>
        <fullName evidence="1">PGAM</fullName>
    </alternativeName>
    <alternativeName>
        <fullName evidence="1">Phosphoglyceromutase</fullName>
    </alternativeName>
</protein>
<name>GPMB_SALA4</name>
<reference key="1">
    <citation type="journal article" date="2011" name="J. Bacteriol.">
        <title>Comparative genomics of 28 Salmonella enterica isolates: evidence for CRISPR-mediated adaptive sublineage evolution.</title>
        <authorList>
            <person name="Fricke W.F."/>
            <person name="Mammel M.K."/>
            <person name="McDermott P.F."/>
            <person name="Tartera C."/>
            <person name="White D.G."/>
            <person name="Leclerc J.E."/>
            <person name="Ravel J."/>
            <person name="Cebula T.A."/>
        </authorList>
    </citation>
    <scope>NUCLEOTIDE SEQUENCE [LARGE SCALE GENOMIC DNA]</scope>
    <source>
        <strain>SL483</strain>
    </source>
</reference>
<proteinExistence type="inferred from homology"/>